<name>RPIA_PSEPK</name>
<sequence>MTQDQLKQAVAQAAVDFILPKLDEKSVVGVGTGSTANFFIDALAQHKTAFDGAVASSEATAQRLKGHGIPVYELNSVSELEFYVDGADESDAHLHLIKGGGAALTREKIVAAVAKTFICIADGSKLVPVLGAFPLPVEVIPMARSHVARQLVKLGGDPVYREGVVTDNGNVILDVYNLQITNPVELEAQINAIVGVVTNGLFAARPADLLLLGTAEGVKSLKAE</sequence>
<keyword id="KW-0413">Isomerase</keyword>
<keyword id="KW-1185">Reference proteome</keyword>
<feature type="chain" id="PRO_0000158451" description="Ribose-5-phosphate isomerase A">
    <location>
        <begin position="1"/>
        <end position="224"/>
    </location>
</feature>
<feature type="active site" description="Proton acceptor" evidence="1">
    <location>
        <position position="107"/>
    </location>
</feature>
<feature type="binding site" evidence="1">
    <location>
        <begin position="32"/>
        <end position="35"/>
    </location>
    <ligand>
        <name>substrate</name>
    </ligand>
</feature>
<feature type="binding site" evidence="1">
    <location>
        <begin position="85"/>
        <end position="88"/>
    </location>
    <ligand>
        <name>substrate</name>
    </ligand>
</feature>
<feature type="binding site" evidence="1">
    <location>
        <begin position="98"/>
        <end position="101"/>
    </location>
    <ligand>
        <name>substrate</name>
    </ligand>
</feature>
<feature type="binding site" evidence="1">
    <location>
        <position position="125"/>
    </location>
    <ligand>
        <name>substrate</name>
    </ligand>
</feature>
<proteinExistence type="inferred from homology"/>
<reference key="1">
    <citation type="journal article" date="2002" name="Environ. Microbiol.">
        <title>Complete genome sequence and comparative analysis of the metabolically versatile Pseudomonas putida KT2440.</title>
        <authorList>
            <person name="Nelson K.E."/>
            <person name="Weinel C."/>
            <person name="Paulsen I.T."/>
            <person name="Dodson R.J."/>
            <person name="Hilbert H."/>
            <person name="Martins dos Santos V.A.P."/>
            <person name="Fouts D.E."/>
            <person name="Gill S.R."/>
            <person name="Pop M."/>
            <person name="Holmes M."/>
            <person name="Brinkac L.M."/>
            <person name="Beanan M.J."/>
            <person name="DeBoy R.T."/>
            <person name="Daugherty S.C."/>
            <person name="Kolonay J.F."/>
            <person name="Madupu R."/>
            <person name="Nelson W.C."/>
            <person name="White O."/>
            <person name="Peterson J.D."/>
            <person name="Khouri H.M."/>
            <person name="Hance I."/>
            <person name="Chris Lee P."/>
            <person name="Holtzapple E.K."/>
            <person name="Scanlan D."/>
            <person name="Tran K."/>
            <person name="Moazzez A."/>
            <person name="Utterback T.R."/>
            <person name="Rizzo M."/>
            <person name="Lee K."/>
            <person name="Kosack D."/>
            <person name="Moestl D."/>
            <person name="Wedler H."/>
            <person name="Lauber J."/>
            <person name="Stjepandic D."/>
            <person name="Hoheisel J."/>
            <person name="Straetz M."/>
            <person name="Heim S."/>
            <person name="Kiewitz C."/>
            <person name="Eisen J.A."/>
            <person name="Timmis K.N."/>
            <person name="Duesterhoeft A."/>
            <person name="Tuemmler B."/>
            <person name="Fraser C.M."/>
        </authorList>
    </citation>
    <scope>NUCLEOTIDE SEQUENCE [LARGE SCALE GENOMIC DNA]</scope>
    <source>
        <strain>ATCC 47054 / DSM 6125 / CFBP 8728 / NCIMB 11950 / KT2440</strain>
    </source>
</reference>
<dbReference type="EC" id="5.3.1.6" evidence="1"/>
<dbReference type="EMBL" id="AE015451">
    <property type="protein sequence ID" value="AAN70715.1"/>
    <property type="molecule type" value="Genomic_DNA"/>
</dbReference>
<dbReference type="RefSeq" id="NP_747251.1">
    <property type="nucleotide sequence ID" value="NC_002947.4"/>
</dbReference>
<dbReference type="RefSeq" id="WP_003249004.1">
    <property type="nucleotide sequence ID" value="NZ_CP169744.1"/>
</dbReference>
<dbReference type="SMR" id="Q88CN0"/>
<dbReference type="STRING" id="160488.PP_5150"/>
<dbReference type="PaxDb" id="160488-PP_5150"/>
<dbReference type="GeneID" id="83682887"/>
<dbReference type="KEGG" id="ppu:PP_5150"/>
<dbReference type="PATRIC" id="fig|160488.4.peg.5497"/>
<dbReference type="eggNOG" id="COG0120">
    <property type="taxonomic scope" value="Bacteria"/>
</dbReference>
<dbReference type="HOGENOM" id="CLU_056590_1_1_6"/>
<dbReference type="OrthoDB" id="5870696at2"/>
<dbReference type="PhylomeDB" id="Q88CN0"/>
<dbReference type="BioCyc" id="PPUT160488:G1G01-5495-MONOMER"/>
<dbReference type="UniPathway" id="UPA00115">
    <property type="reaction ID" value="UER00412"/>
</dbReference>
<dbReference type="Proteomes" id="UP000000556">
    <property type="component" value="Chromosome"/>
</dbReference>
<dbReference type="GO" id="GO:0005829">
    <property type="term" value="C:cytosol"/>
    <property type="evidence" value="ECO:0007669"/>
    <property type="project" value="TreeGrafter"/>
</dbReference>
<dbReference type="GO" id="GO:0004751">
    <property type="term" value="F:ribose-5-phosphate isomerase activity"/>
    <property type="evidence" value="ECO:0007669"/>
    <property type="project" value="UniProtKB-UniRule"/>
</dbReference>
<dbReference type="GO" id="GO:0006014">
    <property type="term" value="P:D-ribose metabolic process"/>
    <property type="evidence" value="ECO:0007669"/>
    <property type="project" value="TreeGrafter"/>
</dbReference>
<dbReference type="GO" id="GO:0009052">
    <property type="term" value="P:pentose-phosphate shunt, non-oxidative branch"/>
    <property type="evidence" value="ECO:0007669"/>
    <property type="project" value="UniProtKB-UniRule"/>
</dbReference>
<dbReference type="CDD" id="cd01398">
    <property type="entry name" value="RPI_A"/>
    <property type="match status" value="1"/>
</dbReference>
<dbReference type="FunFam" id="3.30.70.260:FF:000004">
    <property type="entry name" value="Ribose-5-phosphate isomerase A"/>
    <property type="match status" value="1"/>
</dbReference>
<dbReference type="FunFam" id="3.40.50.1360:FF:000001">
    <property type="entry name" value="Ribose-5-phosphate isomerase A"/>
    <property type="match status" value="1"/>
</dbReference>
<dbReference type="Gene3D" id="3.30.70.260">
    <property type="match status" value="1"/>
</dbReference>
<dbReference type="Gene3D" id="3.40.50.1360">
    <property type="match status" value="1"/>
</dbReference>
<dbReference type="HAMAP" id="MF_00170">
    <property type="entry name" value="Rib_5P_isom_A"/>
    <property type="match status" value="1"/>
</dbReference>
<dbReference type="InterPro" id="IPR037171">
    <property type="entry name" value="NagB/RpiA_transferase-like"/>
</dbReference>
<dbReference type="InterPro" id="IPR020672">
    <property type="entry name" value="Ribose5P_isomerase_typA_subgr"/>
</dbReference>
<dbReference type="InterPro" id="IPR004788">
    <property type="entry name" value="Ribose5P_isomerase_type_A"/>
</dbReference>
<dbReference type="NCBIfam" id="NF001924">
    <property type="entry name" value="PRK00702.1"/>
    <property type="match status" value="1"/>
</dbReference>
<dbReference type="NCBIfam" id="TIGR00021">
    <property type="entry name" value="rpiA"/>
    <property type="match status" value="1"/>
</dbReference>
<dbReference type="PANTHER" id="PTHR11934">
    <property type="entry name" value="RIBOSE-5-PHOSPHATE ISOMERASE"/>
    <property type="match status" value="1"/>
</dbReference>
<dbReference type="PANTHER" id="PTHR11934:SF0">
    <property type="entry name" value="RIBOSE-5-PHOSPHATE ISOMERASE"/>
    <property type="match status" value="1"/>
</dbReference>
<dbReference type="Pfam" id="PF06026">
    <property type="entry name" value="Rib_5-P_isom_A"/>
    <property type="match status" value="1"/>
</dbReference>
<dbReference type="SUPFAM" id="SSF75445">
    <property type="entry name" value="D-ribose-5-phosphate isomerase (RpiA), lid domain"/>
    <property type="match status" value="1"/>
</dbReference>
<dbReference type="SUPFAM" id="SSF100950">
    <property type="entry name" value="NagB/RpiA/CoA transferase-like"/>
    <property type="match status" value="1"/>
</dbReference>
<protein>
    <recommendedName>
        <fullName evidence="1">Ribose-5-phosphate isomerase A</fullName>
        <ecNumber evidence="1">5.3.1.6</ecNumber>
    </recommendedName>
    <alternativeName>
        <fullName evidence="1">Phosphoriboisomerase A</fullName>
        <shortName evidence="1">PRI</shortName>
    </alternativeName>
</protein>
<comment type="function">
    <text evidence="1">Catalyzes the reversible conversion of ribose-5-phosphate to ribulose 5-phosphate.</text>
</comment>
<comment type="catalytic activity">
    <reaction evidence="1">
        <text>aldehydo-D-ribose 5-phosphate = D-ribulose 5-phosphate</text>
        <dbReference type="Rhea" id="RHEA:14657"/>
        <dbReference type="ChEBI" id="CHEBI:58121"/>
        <dbReference type="ChEBI" id="CHEBI:58273"/>
        <dbReference type="EC" id="5.3.1.6"/>
    </reaction>
</comment>
<comment type="pathway">
    <text evidence="1">Carbohydrate degradation; pentose phosphate pathway; D-ribose 5-phosphate from D-ribulose 5-phosphate (non-oxidative stage): step 1/1.</text>
</comment>
<comment type="subunit">
    <text evidence="1">Homodimer.</text>
</comment>
<comment type="similarity">
    <text evidence="1">Belongs to the ribose 5-phosphate isomerase family.</text>
</comment>
<accession>Q88CN0</accession>
<organism>
    <name type="scientific">Pseudomonas putida (strain ATCC 47054 / DSM 6125 / CFBP 8728 / NCIMB 11950 / KT2440)</name>
    <dbReference type="NCBI Taxonomy" id="160488"/>
    <lineage>
        <taxon>Bacteria</taxon>
        <taxon>Pseudomonadati</taxon>
        <taxon>Pseudomonadota</taxon>
        <taxon>Gammaproteobacteria</taxon>
        <taxon>Pseudomonadales</taxon>
        <taxon>Pseudomonadaceae</taxon>
        <taxon>Pseudomonas</taxon>
    </lineage>
</organism>
<gene>
    <name evidence="1" type="primary">rpiA</name>
    <name type="ordered locus">PP_5150</name>
</gene>
<evidence type="ECO:0000255" key="1">
    <source>
        <dbReference type="HAMAP-Rule" id="MF_00170"/>
    </source>
</evidence>